<keyword id="KW-0975">Bacterial flagellum</keyword>
<keyword id="KW-0574">Periplasm</keyword>
<keyword id="KW-1185">Reference proteome</keyword>
<keyword id="KW-0732">Signal</keyword>
<proteinExistence type="inferred from homology"/>
<reference key="1">
    <citation type="journal article" date="2004" name="Environ. Microbiol.">
        <title>The genome of Desulfotalea psychrophila, a sulfate-reducing bacterium from permanently cold Arctic sediments.</title>
        <authorList>
            <person name="Rabus R."/>
            <person name="Ruepp A."/>
            <person name="Frickey T."/>
            <person name="Rattei T."/>
            <person name="Fartmann B."/>
            <person name="Stark M."/>
            <person name="Bauer M."/>
            <person name="Zibat A."/>
            <person name="Lombardot T."/>
            <person name="Becker I."/>
            <person name="Amann J."/>
            <person name="Gellner K."/>
            <person name="Teeling H."/>
            <person name="Leuschner W.D."/>
            <person name="Gloeckner F.-O."/>
            <person name="Lupas A.N."/>
            <person name="Amann R."/>
            <person name="Klenk H.-P."/>
        </authorList>
    </citation>
    <scope>NUCLEOTIDE SEQUENCE [LARGE SCALE GENOMIC DNA]</scope>
    <source>
        <strain>DSM 12343 / LSv54</strain>
    </source>
</reference>
<feature type="signal peptide" evidence="1">
    <location>
        <begin position="1"/>
        <end position="36"/>
    </location>
</feature>
<feature type="chain" id="PRO_0000041794" description="Flagellar P-ring protein">
    <location>
        <begin position="37"/>
        <end position="390"/>
    </location>
</feature>
<protein>
    <recommendedName>
        <fullName evidence="1">Flagellar P-ring protein</fullName>
    </recommendedName>
    <alternativeName>
        <fullName evidence="1">Basal body P-ring protein</fullName>
    </alternativeName>
</protein>
<dbReference type="EMBL" id="CR522870">
    <property type="protein sequence ID" value="CAG37413.1"/>
    <property type="molecule type" value="Genomic_DNA"/>
</dbReference>
<dbReference type="RefSeq" id="WP_011189925.1">
    <property type="nucleotide sequence ID" value="NC_006138.1"/>
</dbReference>
<dbReference type="SMR" id="Q6AJR7"/>
<dbReference type="STRING" id="177439.DP2684"/>
<dbReference type="KEGG" id="dps:DP2684"/>
<dbReference type="eggNOG" id="COG1706">
    <property type="taxonomic scope" value="Bacteria"/>
</dbReference>
<dbReference type="HOGENOM" id="CLU_045235_1_0_7"/>
<dbReference type="OrthoDB" id="9786431at2"/>
<dbReference type="Proteomes" id="UP000000602">
    <property type="component" value="Chromosome"/>
</dbReference>
<dbReference type="GO" id="GO:0009428">
    <property type="term" value="C:bacterial-type flagellum basal body, distal rod, P ring"/>
    <property type="evidence" value="ECO:0007669"/>
    <property type="project" value="InterPro"/>
</dbReference>
<dbReference type="GO" id="GO:0030288">
    <property type="term" value="C:outer membrane-bounded periplasmic space"/>
    <property type="evidence" value="ECO:0007669"/>
    <property type="project" value="InterPro"/>
</dbReference>
<dbReference type="GO" id="GO:0005198">
    <property type="term" value="F:structural molecule activity"/>
    <property type="evidence" value="ECO:0007669"/>
    <property type="project" value="InterPro"/>
</dbReference>
<dbReference type="GO" id="GO:0071973">
    <property type="term" value="P:bacterial-type flagellum-dependent cell motility"/>
    <property type="evidence" value="ECO:0007669"/>
    <property type="project" value="InterPro"/>
</dbReference>
<dbReference type="HAMAP" id="MF_00416">
    <property type="entry name" value="FlgI"/>
    <property type="match status" value="1"/>
</dbReference>
<dbReference type="InterPro" id="IPR001782">
    <property type="entry name" value="Flag_FlgI"/>
</dbReference>
<dbReference type="NCBIfam" id="NF003676">
    <property type="entry name" value="PRK05303.1"/>
    <property type="match status" value="1"/>
</dbReference>
<dbReference type="PANTHER" id="PTHR30381">
    <property type="entry name" value="FLAGELLAR P-RING PERIPLASMIC PROTEIN FLGI"/>
    <property type="match status" value="1"/>
</dbReference>
<dbReference type="PANTHER" id="PTHR30381:SF0">
    <property type="entry name" value="FLAGELLAR P-RING PROTEIN"/>
    <property type="match status" value="1"/>
</dbReference>
<dbReference type="Pfam" id="PF02119">
    <property type="entry name" value="FlgI"/>
    <property type="match status" value="1"/>
</dbReference>
<dbReference type="PRINTS" id="PR01010">
    <property type="entry name" value="FLGPRINGFLGI"/>
</dbReference>
<gene>
    <name evidence="1" type="primary">flgI</name>
    <name type="ordered locus">DP2684</name>
</gene>
<accession>Q6AJR7</accession>
<sequence length="390" mass="41390">MFFSRKIRSLLLTPKRRWSLILTLCLIFTGINFSTSNDVQASRIKDIAQLHGVRSNQLIGYGLITGLNGTGDDMKKSAFTLQAIYNMMTRSGITLNPSEMKSIKIKNVAAVMVTASLPPFASSGSKIDIQVSSMGDAKSLAGGTLLMTPLKGVDNRVYAIAQGPLAIGAFSFGGKSAQAQKNHPNAGRIPDGATVEDTVLVDIGADGTLTYQLANADFTTANNMTRAINKKFGKDTAYPLDSGSVTINIPPHFSKRVVQFVANVESIDITADSVARVVVNERTGTVVMGQNVRLSTVAVSHGNLNLIIRESFDVSQPAPLADGETVITPSTEISVTEEEGQLVVLNMKNDVSIGEIANALNAIGATPRDLIAIFQAIKAAGAMHGELIVL</sequence>
<organism>
    <name type="scientific">Desulfotalea psychrophila (strain LSv54 / DSM 12343)</name>
    <dbReference type="NCBI Taxonomy" id="177439"/>
    <lineage>
        <taxon>Bacteria</taxon>
        <taxon>Pseudomonadati</taxon>
        <taxon>Thermodesulfobacteriota</taxon>
        <taxon>Desulfobulbia</taxon>
        <taxon>Desulfobulbales</taxon>
        <taxon>Desulfocapsaceae</taxon>
        <taxon>Desulfotalea</taxon>
    </lineage>
</organism>
<evidence type="ECO:0000255" key="1">
    <source>
        <dbReference type="HAMAP-Rule" id="MF_00416"/>
    </source>
</evidence>
<comment type="function">
    <text evidence="1">Assembles around the rod to form the L-ring and probably protects the motor/basal body from shearing forces during rotation.</text>
</comment>
<comment type="subunit">
    <text evidence="1">The basal body constitutes a major portion of the flagellar organelle and consists of four rings (L,P,S, and M) mounted on a central rod.</text>
</comment>
<comment type="subcellular location">
    <subcellularLocation>
        <location evidence="1">Periplasm</location>
    </subcellularLocation>
    <subcellularLocation>
        <location evidence="1">Bacterial flagellum basal body</location>
    </subcellularLocation>
</comment>
<comment type="similarity">
    <text evidence="1">Belongs to the FlgI family.</text>
</comment>
<name>FLGI_DESPS</name>